<sequence>MGKLVVQGGTVLEGEVEISGSKNAALPIMAAAILCDEEIILKNVPRLQDVFVMIDILRSIGFRVEFDENELKIKRENDISQEVPYELVRKMRASFNVLGPIAVRTGRAKVALPGGCSIGVRPVDFHLEGLKKMGFSIKVEHGFVEATFERRTDQVTITLPFPSVGATEHLMTTAALLEGTRVVIENAAMEPEIVDLQNFINRMGGRIEGAGTSRIVIEGVEKMQGVEYSIIPDRIEAGTYLVAIAASRGKGLVKNVNPDHLTNFFEKLEETGVKLKVFGNEVEIEMRERPEAVDVTTNPYPGFPTDLQPQMMAYLSIASGVSVITENVFKTRFLHVDELKRMGADIEVSGNVAIVKGVEKLSGAPVEGTDLRATAALLIAGIIADGVTEISNVEHIFRGYEDVIDKFSKLGAKIEYVEKEN</sequence>
<proteinExistence type="inferred from homology"/>
<evidence type="ECO:0000255" key="1">
    <source>
        <dbReference type="HAMAP-Rule" id="MF_00111"/>
    </source>
</evidence>
<comment type="function">
    <text evidence="1">Cell wall formation. Adds enolpyruvyl to UDP-N-acetylglucosamine.</text>
</comment>
<comment type="catalytic activity">
    <reaction evidence="1">
        <text>phosphoenolpyruvate + UDP-N-acetyl-alpha-D-glucosamine = UDP-N-acetyl-3-O-(1-carboxyvinyl)-alpha-D-glucosamine + phosphate</text>
        <dbReference type="Rhea" id="RHEA:18681"/>
        <dbReference type="ChEBI" id="CHEBI:43474"/>
        <dbReference type="ChEBI" id="CHEBI:57705"/>
        <dbReference type="ChEBI" id="CHEBI:58702"/>
        <dbReference type="ChEBI" id="CHEBI:68483"/>
        <dbReference type="EC" id="2.5.1.7"/>
    </reaction>
</comment>
<comment type="pathway">
    <text evidence="1">Cell wall biogenesis; peptidoglycan biosynthesis.</text>
</comment>
<comment type="subcellular location">
    <subcellularLocation>
        <location evidence="1">Cytoplasm</location>
    </subcellularLocation>
</comment>
<comment type="similarity">
    <text evidence="1">Belongs to the EPSP synthase family. MurA subfamily.</text>
</comment>
<organism>
    <name type="scientific">Thermotoga petrophila (strain ATCC BAA-488 / DSM 13995 / JCM 10881 / RKU-1)</name>
    <dbReference type="NCBI Taxonomy" id="390874"/>
    <lineage>
        <taxon>Bacteria</taxon>
        <taxon>Thermotogati</taxon>
        <taxon>Thermotogota</taxon>
        <taxon>Thermotogae</taxon>
        <taxon>Thermotogales</taxon>
        <taxon>Thermotogaceae</taxon>
        <taxon>Thermotoga</taxon>
    </lineage>
</organism>
<accession>A5IKW2</accession>
<name>MURA_THEP1</name>
<dbReference type="EC" id="2.5.1.7" evidence="1"/>
<dbReference type="EMBL" id="CP000702">
    <property type="protein sequence ID" value="ABQ46835.1"/>
    <property type="molecule type" value="Genomic_DNA"/>
</dbReference>
<dbReference type="RefSeq" id="WP_011943403.1">
    <property type="nucleotide sequence ID" value="NC_009486.1"/>
</dbReference>
<dbReference type="SMR" id="A5IKW2"/>
<dbReference type="STRING" id="390874.Tpet_0816"/>
<dbReference type="KEGG" id="tpt:Tpet_0816"/>
<dbReference type="eggNOG" id="COG0766">
    <property type="taxonomic scope" value="Bacteria"/>
</dbReference>
<dbReference type="HOGENOM" id="CLU_027387_0_0_0"/>
<dbReference type="UniPathway" id="UPA00219"/>
<dbReference type="Proteomes" id="UP000006558">
    <property type="component" value="Chromosome"/>
</dbReference>
<dbReference type="GO" id="GO:0005737">
    <property type="term" value="C:cytoplasm"/>
    <property type="evidence" value="ECO:0007669"/>
    <property type="project" value="UniProtKB-SubCell"/>
</dbReference>
<dbReference type="GO" id="GO:0008760">
    <property type="term" value="F:UDP-N-acetylglucosamine 1-carboxyvinyltransferase activity"/>
    <property type="evidence" value="ECO:0007669"/>
    <property type="project" value="UniProtKB-UniRule"/>
</dbReference>
<dbReference type="GO" id="GO:0051301">
    <property type="term" value="P:cell division"/>
    <property type="evidence" value="ECO:0007669"/>
    <property type="project" value="UniProtKB-KW"/>
</dbReference>
<dbReference type="GO" id="GO:0071555">
    <property type="term" value="P:cell wall organization"/>
    <property type="evidence" value="ECO:0007669"/>
    <property type="project" value="UniProtKB-KW"/>
</dbReference>
<dbReference type="GO" id="GO:0009252">
    <property type="term" value="P:peptidoglycan biosynthetic process"/>
    <property type="evidence" value="ECO:0007669"/>
    <property type="project" value="UniProtKB-UniRule"/>
</dbReference>
<dbReference type="GO" id="GO:0008360">
    <property type="term" value="P:regulation of cell shape"/>
    <property type="evidence" value="ECO:0007669"/>
    <property type="project" value="UniProtKB-KW"/>
</dbReference>
<dbReference type="GO" id="GO:0019277">
    <property type="term" value="P:UDP-N-acetylgalactosamine biosynthetic process"/>
    <property type="evidence" value="ECO:0007669"/>
    <property type="project" value="InterPro"/>
</dbReference>
<dbReference type="CDD" id="cd01555">
    <property type="entry name" value="UdpNAET"/>
    <property type="match status" value="1"/>
</dbReference>
<dbReference type="Gene3D" id="3.65.10.10">
    <property type="entry name" value="Enolpyruvate transferase domain"/>
    <property type="match status" value="2"/>
</dbReference>
<dbReference type="HAMAP" id="MF_00111">
    <property type="entry name" value="MurA"/>
    <property type="match status" value="1"/>
</dbReference>
<dbReference type="InterPro" id="IPR001986">
    <property type="entry name" value="Enolpyruvate_Tfrase_dom"/>
</dbReference>
<dbReference type="InterPro" id="IPR036968">
    <property type="entry name" value="Enolpyruvate_Tfrase_sf"/>
</dbReference>
<dbReference type="InterPro" id="IPR050068">
    <property type="entry name" value="MurA_subfamily"/>
</dbReference>
<dbReference type="InterPro" id="IPR013792">
    <property type="entry name" value="RNA3'P_cycl/enolpyr_Trfase_a/b"/>
</dbReference>
<dbReference type="InterPro" id="IPR005750">
    <property type="entry name" value="UDP_GlcNAc_COvinyl_MurA"/>
</dbReference>
<dbReference type="NCBIfam" id="TIGR01072">
    <property type="entry name" value="murA"/>
    <property type="match status" value="1"/>
</dbReference>
<dbReference type="NCBIfam" id="NF006873">
    <property type="entry name" value="PRK09369.1"/>
    <property type="match status" value="1"/>
</dbReference>
<dbReference type="PANTHER" id="PTHR43783">
    <property type="entry name" value="UDP-N-ACETYLGLUCOSAMINE 1-CARBOXYVINYLTRANSFERASE"/>
    <property type="match status" value="1"/>
</dbReference>
<dbReference type="PANTHER" id="PTHR43783:SF1">
    <property type="entry name" value="UDP-N-ACETYLGLUCOSAMINE 1-CARBOXYVINYLTRANSFERASE"/>
    <property type="match status" value="1"/>
</dbReference>
<dbReference type="Pfam" id="PF00275">
    <property type="entry name" value="EPSP_synthase"/>
    <property type="match status" value="1"/>
</dbReference>
<dbReference type="SUPFAM" id="SSF55205">
    <property type="entry name" value="EPT/RTPC-like"/>
    <property type="match status" value="1"/>
</dbReference>
<keyword id="KW-0131">Cell cycle</keyword>
<keyword id="KW-0132">Cell division</keyword>
<keyword id="KW-0133">Cell shape</keyword>
<keyword id="KW-0961">Cell wall biogenesis/degradation</keyword>
<keyword id="KW-0963">Cytoplasm</keyword>
<keyword id="KW-0573">Peptidoglycan synthesis</keyword>
<keyword id="KW-0670">Pyruvate</keyword>
<keyword id="KW-0808">Transferase</keyword>
<protein>
    <recommendedName>
        <fullName evidence="1">UDP-N-acetylglucosamine 1-carboxyvinyltransferase</fullName>
        <ecNumber evidence="1">2.5.1.7</ecNumber>
    </recommendedName>
    <alternativeName>
        <fullName evidence="1">Enoylpyruvate transferase</fullName>
    </alternativeName>
    <alternativeName>
        <fullName evidence="1">UDP-N-acetylglucosamine enolpyruvyl transferase</fullName>
        <shortName evidence="1">EPT</shortName>
    </alternativeName>
</protein>
<feature type="chain" id="PRO_1000023118" description="UDP-N-acetylglucosamine 1-carboxyvinyltransferase">
    <location>
        <begin position="1"/>
        <end position="421"/>
    </location>
</feature>
<feature type="active site" description="Proton donor" evidence="1">
    <location>
        <position position="116"/>
    </location>
</feature>
<feature type="binding site" evidence="1">
    <location>
        <begin position="22"/>
        <end position="23"/>
    </location>
    <ligand>
        <name>phosphoenolpyruvate</name>
        <dbReference type="ChEBI" id="CHEBI:58702"/>
    </ligand>
</feature>
<feature type="binding site" evidence="1">
    <location>
        <position position="92"/>
    </location>
    <ligand>
        <name>UDP-N-acetyl-alpha-D-glucosamine</name>
        <dbReference type="ChEBI" id="CHEBI:57705"/>
    </ligand>
</feature>
<feature type="binding site" evidence="1">
    <location>
        <position position="306"/>
    </location>
    <ligand>
        <name>UDP-N-acetyl-alpha-D-glucosamine</name>
        <dbReference type="ChEBI" id="CHEBI:57705"/>
    </ligand>
</feature>
<feature type="binding site" evidence="1">
    <location>
        <position position="328"/>
    </location>
    <ligand>
        <name>UDP-N-acetyl-alpha-D-glucosamine</name>
        <dbReference type="ChEBI" id="CHEBI:57705"/>
    </ligand>
</feature>
<feature type="modified residue" description="2-(S-cysteinyl)pyruvic acid O-phosphothioketal" evidence="1">
    <location>
        <position position="116"/>
    </location>
</feature>
<gene>
    <name evidence="1" type="primary">murA</name>
    <name type="ordered locus">Tpet_0816</name>
</gene>
<reference key="1">
    <citation type="submission" date="2007-05" db="EMBL/GenBank/DDBJ databases">
        <title>Complete sequence of Thermotoga petrophila RKU-1.</title>
        <authorList>
            <consortium name="US DOE Joint Genome Institute"/>
            <person name="Copeland A."/>
            <person name="Lucas S."/>
            <person name="Lapidus A."/>
            <person name="Barry K."/>
            <person name="Glavina del Rio T."/>
            <person name="Dalin E."/>
            <person name="Tice H."/>
            <person name="Pitluck S."/>
            <person name="Sims D."/>
            <person name="Brettin T."/>
            <person name="Bruce D."/>
            <person name="Detter J.C."/>
            <person name="Han C."/>
            <person name="Tapia R."/>
            <person name="Schmutz J."/>
            <person name="Larimer F."/>
            <person name="Land M."/>
            <person name="Hauser L."/>
            <person name="Kyrpides N."/>
            <person name="Mikhailova N."/>
            <person name="Nelson K."/>
            <person name="Gogarten J.P."/>
            <person name="Noll K."/>
            <person name="Richardson P."/>
        </authorList>
    </citation>
    <scope>NUCLEOTIDE SEQUENCE [LARGE SCALE GENOMIC DNA]</scope>
    <source>
        <strain>ATCC BAA-488 / DSM 13995 / JCM 10881 / RKU-1</strain>
    </source>
</reference>